<reference key="1">
    <citation type="journal article" date="2011" name="MBio">
        <title>Novel metabolic attributes of the genus Cyanothece, comprising a group of unicellular nitrogen-fixing Cyanobacteria.</title>
        <authorList>
            <person name="Bandyopadhyay A."/>
            <person name="Elvitigala T."/>
            <person name="Welsh E."/>
            <person name="Stockel J."/>
            <person name="Liberton M."/>
            <person name="Min H."/>
            <person name="Sherman L.A."/>
            <person name="Pakrasi H.B."/>
        </authorList>
    </citation>
    <scope>NUCLEOTIDE SEQUENCE [LARGE SCALE GENOMIC DNA]</scope>
    <source>
        <strain>PCC 8801 / RF-1</strain>
    </source>
</reference>
<comment type="function">
    <text evidence="1">This protein is involved in the repair of mismatches in DNA. It is required for dam-dependent methyl-directed DNA mismatch repair. May act as a 'molecular matchmaker', a protein that promotes the formation of a stable complex between two or more DNA-binding proteins in an ATP-dependent manner without itself being part of a final effector complex.</text>
</comment>
<comment type="similarity">
    <text evidence="1">Belongs to the DNA mismatch repair MutL/HexB family.</text>
</comment>
<accession>B7JY11</accession>
<evidence type="ECO:0000255" key="1">
    <source>
        <dbReference type="HAMAP-Rule" id="MF_00149"/>
    </source>
</evidence>
<name>MUTL_RIPO1</name>
<gene>
    <name evidence="1" type="primary">mutL</name>
    <name type="ordered locus">PCC8801_1937</name>
</gene>
<protein>
    <recommendedName>
        <fullName evidence="1">DNA mismatch repair protein MutL</fullName>
    </recommendedName>
</protein>
<organism>
    <name type="scientific">Rippkaea orientalis (strain PCC 8801 / RF-1)</name>
    <name type="common">Cyanothece sp. (strain PCC 8801)</name>
    <dbReference type="NCBI Taxonomy" id="41431"/>
    <lineage>
        <taxon>Bacteria</taxon>
        <taxon>Bacillati</taxon>
        <taxon>Cyanobacteriota</taxon>
        <taxon>Cyanophyceae</taxon>
        <taxon>Oscillatoriophycideae</taxon>
        <taxon>Chroococcales</taxon>
        <taxon>Aphanothecaceae</taxon>
        <taxon>Rippkaea</taxon>
        <taxon>Rippkaea orientalis</taxon>
    </lineage>
</organism>
<keyword id="KW-0227">DNA damage</keyword>
<keyword id="KW-0234">DNA repair</keyword>
<keyword id="KW-1185">Reference proteome</keyword>
<sequence>MSSPIQPLPLNVINLIAAGEVIDSIAAVVRELVENALDAGATRLVISLFPESWRVQVADNGTGMTLADLRHCALPHSTSKIHQLDDLWKITTLGFRGEALHSLAQVADLEIASRCTSDGVGWCLRYQSSGEPLREEPTAIAPGTIVTVGNLFGKMPVRRQGLPAISTQLKAVQSFIENMALCHPQVTWQVWHNQRLWLNISPGKTPQQILPQLLKGVHYHDLQFVSQGVKSPQESTQKDLDLIEVTLGLPDRCHRHRPDWVKVGINGRIVRSPPVEQAILVAFSRTLPKDRFPVCFIHLTLCPSQIDWNRHPAKVEIYLHSLDFWQEQVSKLIEQGLRLSPQTLASAAQNQRVGKLLKASEEKASYRVDAKDHQTDANAVGLMPLKAVAQVRNTYIMAEHSTGLWLIEQHIAHERVLYETLQDNWQLIPLETPIILTKLSDNQVEQLARIGLEIEVFGEQLWAVRTVPKLLSTREDCPEALVELSIGGDLQTAQVAVACRSAIRNGTPMTLSQMQELLDQWKTTRNPATCPHGRPIYLSLEESSLSRFFRRHWVIGKSHGI</sequence>
<dbReference type="EMBL" id="CP001287">
    <property type="protein sequence ID" value="ACK65975.1"/>
    <property type="molecule type" value="Genomic_DNA"/>
</dbReference>
<dbReference type="RefSeq" id="WP_012595247.1">
    <property type="nucleotide sequence ID" value="NC_011726.1"/>
</dbReference>
<dbReference type="SMR" id="B7JY11"/>
<dbReference type="STRING" id="41431.PCC8801_1937"/>
<dbReference type="KEGG" id="cyp:PCC8801_1937"/>
<dbReference type="eggNOG" id="COG0323">
    <property type="taxonomic scope" value="Bacteria"/>
</dbReference>
<dbReference type="HOGENOM" id="CLU_004131_4_1_3"/>
<dbReference type="OrthoDB" id="9763467at2"/>
<dbReference type="Proteomes" id="UP000008204">
    <property type="component" value="Chromosome"/>
</dbReference>
<dbReference type="GO" id="GO:0032300">
    <property type="term" value="C:mismatch repair complex"/>
    <property type="evidence" value="ECO:0007669"/>
    <property type="project" value="InterPro"/>
</dbReference>
<dbReference type="GO" id="GO:0005524">
    <property type="term" value="F:ATP binding"/>
    <property type="evidence" value="ECO:0007669"/>
    <property type="project" value="InterPro"/>
</dbReference>
<dbReference type="GO" id="GO:0016887">
    <property type="term" value="F:ATP hydrolysis activity"/>
    <property type="evidence" value="ECO:0007669"/>
    <property type="project" value="InterPro"/>
</dbReference>
<dbReference type="GO" id="GO:0140664">
    <property type="term" value="F:ATP-dependent DNA damage sensor activity"/>
    <property type="evidence" value="ECO:0007669"/>
    <property type="project" value="InterPro"/>
</dbReference>
<dbReference type="GO" id="GO:0030983">
    <property type="term" value="F:mismatched DNA binding"/>
    <property type="evidence" value="ECO:0007669"/>
    <property type="project" value="InterPro"/>
</dbReference>
<dbReference type="GO" id="GO:0006298">
    <property type="term" value="P:mismatch repair"/>
    <property type="evidence" value="ECO:0007669"/>
    <property type="project" value="UniProtKB-UniRule"/>
</dbReference>
<dbReference type="CDD" id="cd16926">
    <property type="entry name" value="HATPase_MutL-MLH-PMS-like"/>
    <property type="match status" value="1"/>
</dbReference>
<dbReference type="CDD" id="cd00782">
    <property type="entry name" value="MutL_Trans"/>
    <property type="match status" value="1"/>
</dbReference>
<dbReference type="FunFam" id="3.30.565.10:FF:000003">
    <property type="entry name" value="DNA mismatch repair endonuclease MutL"/>
    <property type="match status" value="1"/>
</dbReference>
<dbReference type="Gene3D" id="3.30.230.10">
    <property type="match status" value="1"/>
</dbReference>
<dbReference type="Gene3D" id="3.30.565.10">
    <property type="entry name" value="Histidine kinase-like ATPase, C-terminal domain"/>
    <property type="match status" value="1"/>
</dbReference>
<dbReference type="Gene3D" id="3.30.1540.20">
    <property type="entry name" value="MutL, C-terminal domain, dimerisation subdomain"/>
    <property type="match status" value="1"/>
</dbReference>
<dbReference type="Gene3D" id="3.30.1370.100">
    <property type="entry name" value="MutL, C-terminal domain, regulatory subdomain"/>
    <property type="match status" value="1"/>
</dbReference>
<dbReference type="HAMAP" id="MF_00149">
    <property type="entry name" value="DNA_mis_repair"/>
    <property type="match status" value="1"/>
</dbReference>
<dbReference type="InterPro" id="IPR014762">
    <property type="entry name" value="DNA_mismatch_repair_CS"/>
</dbReference>
<dbReference type="InterPro" id="IPR020667">
    <property type="entry name" value="DNA_mismatch_repair_MutL"/>
</dbReference>
<dbReference type="InterPro" id="IPR013507">
    <property type="entry name" value="DNA_mismatch_S5_2-like"/>
</dbReference>
<dbReference type="InterPro" id="IPR036890">
    <property type="entry name" value="HATPase_C_sf"/>
</dbReference>
<dbReference type="InterPro" id="IPR002099">
    <property type="entry name" value="MutL/Mlh/PMS"/>
</dbReference>
<dbReference type="InterPro" id="IPR038973">
    <property type="entry name" value="MutL/Mlh/Pms-like"/>
</dbReference>
<dbReference type="InterPro" id="IPR014790">
    <property type="entry name" value="MutL_C"/>
</dbReference>
<dbReference type="InterPro" id="IPR042120">
    <property type="entry name" value="MutL_C_dimsub"/>
</dbReference>
<dbReference type="InterPro" id="IPR042121">
    <property type="entry name" value="MutL_C_regsub"/>
</dbReference>
<dbReference type="InterPro" id="IPR037198">
    <property type="entry name" value="MutL_C_sf"/>
</dbReference>
<dbReference type="InterPro" id="IPR020568">
    <property type="entry name" value="Ribosomal_Su5_D2-typ_SF"/>
</dbReference>
<dbReference type="InterPro" id="IPR014721">
    <property type="entry name" value="Ribsml_uS5_D2-typ_fold_subgr"/>
</dbReference>
<dbReference type="NCBIfam" id="TIGR00585">
    <property type="entry name" value="mutl"/>
    <property type="match status" value="1"/>
</dbReference>
<dbReference type="NCBIfam" id="NF000951">
    <property type="entry name" value="PRK00095.2-1"/>
    <property type="match status" value="1"/>
</dbReference>
<dbReference type="PANTHER" id="PTHR10073">
    <property type="entry name" value="DNA MISMATCH REPAIR PROTEIN MLH, PMS, MUTL"/>
    <property type="match status" value="1"/>
</dbReference>
<dbReference type="PANTHER" id="PTHR10073:SF12">
    <property type="entry name" value="DNA MISMATCH REPAIR PROTEIN MLH1"/>
    <property type="match status" value="1"/>
</dbReference>
<dbReference type="Pfam" id="PF01119">
    <property type="entry name" value="DNA_mis_repair"/>
    <property type="match status" value="1"/>
</dbReference>
<dbReference type="Pfam" id="PF13589">
    <property type="entry name" value="HATPase_c_3"/>
    <property type="match status" value="1"/>
</dbReference>
<dbReference type="Pfam" id="PF08676">
    <property type="entry name" value="MutL_C"/>
    <property type="match status" value="1"/>
</dbReference>
<dbReference type="SMART" id="SM01340">
    <property type="entry name" value="DNA_mis_repair"/>
    <property type="match status" value="1"/>
</dbReference>
<dbReference type="SMART" id="SM00853">
    <property type="entry name" value="MutL_C"/>
    <property type="match status" value="1"/>
</dbReference>
<dbReference type="SUPFAM" id="SSF55874">
    <property type="entry name" value="ATPase domain of HSP90 chaperone/DNA topoisomerase II/histidine kinase"/>
    <property type="match status" value="1"/>
</dbReference>
<dbReference type="SUPFAM" id="SSF118116">
    <property type="entry name" value="DNA mismatch repair protein MutL"/>
    <property type="match status" value="1"/>
</dbReference>
<dbReference type="SUPFAM" id="SSF54211">
    <property type="entry name" value="Ribosomal protein S5 domain 2-like"/>
    <property type="match status" value="1"/>
</dbReference>
<dbReference type="PROSITE" id="PS00058">
    <property type="entry name" value="DNA_MISMATCH_REPAIR_1"/>
    <property type="match status" value="1"/>
</dbReference>
<feature type="chain" id="PRO_1000192168" description="DNA mismatch repair protein MutL">
    <location>
        <begin position="1"/>
        <end position="561"/>
    </location>
</feature>
<proteinExistence type="inferred from homology"/>